<evidence type="ECO:0000255" key="1">
    <source>
        <dbReference type="HAMAP-Rule" id="MF_01800"/>
    </source>
</evidence>
<sequence length="1510" mass="173286">MSDVFELENEIELESDEVILENENVEEIVDAPIPFSMTTNNGIERGKFRSLTLINWNGFFARTFDLDELVTTLSGGNGAGKSTTMAGFVTALIPDLTLLHFRNTTEAGSTGGSRDKGLHGKLRPGVCYAVLDTINSRHQRILVGVRLQQIAGRDKKVDLKTFSIQGVELSQNPTALFTETVGEHQARVLNLNELKDKIENIGAQFKQYHSITDYHGMMFDLGIIPKRLRSASDRSKFYKLIEASLYGGISSAITRSLRDYLLPENLGVRKAFQDMESALRENRMTLEAIKVTQSDRDLFKHLITETTNYVASDYMRNANERRGNIEAALESRREWYKAKAEQNLSQHRLVDLSREVAELAESERTLEVDHQSAVDHLNLVLNALRHQEKITRYQEDIAELTERLEEQKMVVEDANDALEESQAQFEQTEIEIDAVRSQLADYQQALDAQQTRALQYQQAIAALEKAKTLCGLADLSVKNVEDYHAEFDAHAESLTETVLELEHKMSISEAAKSQFDKAYQLVCKIAGEMPRSTAWESAKELLREYPSQKLQAQQTPQLRTKLHELEQRYAQQQSAVKLLNDFNQRANLSLQTAEELEDYHAEQEALIEDISARLSEQVENRSTLRQKRENLTALYDENARKAPAWLTAQAALERLEQQSGERFEHSQDVMNFMQSQLVKERELTMQRDQLEQKRLHLDEQISRLSQPDGSEDPRLNMLAERFGGVLLSELYDDVTIEDAPYFSALYGPSRHAIVVRDLNAVREQLAQLEDCPDDLYLIEGDPTAFDDSVLSAQELELGVVVQVSDRELRYSRFPEIPLFGCAAREKRLEELQIERDEVAEQHAQIAFDVQKCQRLHEHFSQFVGLHLALAFQPNPEALMSEINRERNEIDRELNQFNSGEQQLRIQLDNAKERLQLLNKLIPQLNVLADEDLIDRIEECREQLDIAEQDEYFIRQHGVTLSQLEPIANSLQSDPENYEGLKNELTQAIERQKQVQQRVFALADVVQRKPHFGYEDAGQAETSELNEKLRQRLEQMQAQRDTQREQVRQKQSQFAEYNRVLIQLQSSYDSKYQLLNELIGEISDLGVRADDGAEERARIRRDELHQQLSTSRQRRSYVEKQLTLIESEADNLNRLIRKTERDYKTQRELVVAAKVSWCVVLRLSRNSDMEKRLNRRELAYLSADELRSMSDKALGALRTAVADNEYLRDSLRVSEDSRKPENKVRFFIAVYQHLRERIRQDIIKTDDPIDAIEQMEIELSRLTAELTGREKKLAISSESVANIMRKTIQREQNRIRMLNQGLQNIAFGQVKSVRLVVNIRDTHAMLLDALSGQQDEYQDLFNDNRITFSEAMAKLYQRINPHIDMGQRTAQTIGEELLDYRNYLELEVEVFRGADGWLRAESGALSTGEAIGTGMSILLMVVQSWEEESRRIRGKDIVPCRLLFLDEAARLDGKSISTLFELCERLDMQLLIAAPENISPEKGTTYKLVRKIAGNQEYVHVVGLRGFGATE</sequence>
<keyword id="KW-0067">ATP-binding</keyword>
<keyword id="KW-0131">Cell cycle</keyword>
<keyword id="KW-0132">Cell division</keyword>
<keyword id="KW-0159">Chromosome partition</keyword>
<keyword id="KW-0175">Coiled coil</keyword>
<keyword id="KW-0963">Cytoplasm</keyword>
<keyword id="KW-0226">DNA condensation</keyword>
<keyword id="KW-0238">DNA-binding</keyword>
<keyword id="KW-0547">Nucleotide-binding</keyword>
<keyword id="KW-1185">Reference proteome</keyword>
<organism>
    <name type="scientific">Haemophilus influenzae (strain ATCC 51907 / DSM 11121 / KW20 / Rd)</name>
    <dbReference type="NCBI Taxonomy" id="71421"/>
    <lineage>
        <taxon>Bacteria</taxon>
        <taxon>Pseudomonadati</taxon>
        <taxon>Pseudomonadota</taxon>
        <taxon>Gammaproteobacteria</taxon>
        <taxon>Pasteurellales</taxon>
        <taxon>Pasteurellaceae</taxon>
        <taxon>Haemophilus</taxon>
    </lineage>
</organism>
<accession>P45187</accession>
<reference key="1">
    <citation type="journal article" date="1995" name="Science">
        <title>Whole-genome random sequencing and assembly of Haemophilus influenzae Rd.</title>
        <authorList>
            <person name="Fleischmann R.D."/>
            <person name="Adams M.D."/>
            <person name="White O."/>
            <person name="Clayton R.A."/>
            <person name="Kirkness E.F."/>
            <person name="Kerlavage A.R."/>
            <person name="Bult C.J."/>
            <person name="Tomb J.-F."/>
            <person name="Dougherty B.A."/>
            <person name="Merrick J.M."/>
            <person name="McKenney K."/>
            <person name="Sutton G.G."/>
            <person name="FitzHugh W."/>
            <person name="Fields C.A."/>
            <person name="Gocayne J.D."/>
            <person name="Scott J.D."/>
            <person name="Shirley R."/>
            <person name="Liu L.-I."/>
            <person name="Glodek A."/>
            <person name="Kelley J.M."/>
            <person name="Weidman J.F."/>
            <person name="Phillips C.A."/>
            <person name="Spriggs T."/>
            <person name="Hedblom E."/>
            <person name="Cotton M.D."/>
            <person name="Utterback T.R."/>
            <person name="Hanna M.C."/>
            <person name="Nguyen D.T."/>
            <person name="Saudek D.M."/>
            <person name="Brandon R.C."/>
            <person name="Fine L.D."/>
            <person name="Fritchman J.L."/>
            <person name="Fuhrmann J.L."/>
            <person name="Geoghagen N.S.M."/>
            <person name="Gnehm C.L."/>
            <person name="McDonald L.A."/>
            <person name="Small K.V."/>
            <person name="Fraser C.M."/>
            <person name="Smith H.O."/>
            <person name="Venter J.C."/>
        </authorList>
    </citation>
    <scope>NUCLEOTIDE SEQUENCE [LARGE SCALE GENOMIC DNA]</scope>
    <source>
        <strain>ATCC 51907 / DSM 11121 / KW20 / Rd</strain>
    </source>
</reference>
<dbReference type="EMBL" id="L42023">
    <property type="protein sequence ID" value="AAC23022.1"/>
    <property type="molecule type" value="Genomic_DNA"/>
</dbReference>
<dbReference type="PIR" id="D64120">
    <property type="entry name" value="D64120"/>
</dbReference>
<dbReference type="RefSeq" id="NP_439526.1">
    <property type="nucleotide sequence ID" value="NC_000907.1"/>
</dbReference>
<dbReference type="SMR" id="P45187"/>
<dbReference type="STRING" id="71421.HI_1374"/>
<dbReference type="EnsemblBacteria" id="AAC23022">
    <property type="protein sequence ID" value="AAC23022"/>
    <property type="gene ID" value="HI_1374"/>
</dbReference>
<dbReference type="KEGG" id="hin:HI_1374"/>
<dbReference type="PATRIC" id="fig|71421.8.peg.1429"/>
<dbReference type="eggNOG" id="COG3096">
    <property type="taxonomic scope" value="Bacteria"/>
</dbReference>
<dbReference type="HOGENOM" id="CLU_004430_0_0_6"/>
<dbReference type="OrthoDB" id="6722439at2"/>
<dbReference type="PhylomeDB" id="P45187"/>
<dbReference type="BioCyc" id="HINF71421:G1GJ1-1400-MONOMER"/>
<dbReference type="Proteomes" id="UP000000579">
    <property type="component" value="Chromosome"/>
</dbReference>
<dbReference type="GO" id="GO:0005737">
    <property type="term" value="C:cytoplasm"/>
    <property type="evidence" value="ECO:0000318"/>
    <property type="project" value="GO_Central"/>
</dbReference>
<dbReference type="GO" id="GO:0009295">
    <property type="term" value="C:nucleoid"/>
    <property type="evidence" value="ECO:0007669"/>
    <property type="project" value="UniProtKB-SubCell"/>
</dbReference>
<dbReference type="GO" id="GO:0005524">
    <property type="term" value="F:ATP binding"/>
    <property type="evidence" value="ECO:0007669"/>
    <property type="project" value="UniProtKB-UniRule"/>
</dbReference>
<dbReference type="GO" id="GO:0003677">
    <property type="term" value="F:DNA binding"/>
    <property type="evidence" value="ECO:0007669"/>
    <property type="project" value="UniProtKB-UniRule"/>
</dbReference>
<dbReference type="GO" id="GO:0051301">
    <property type="term" value="P:cell division"/>
    <property type="evidence" value="ECO:0007669"/>
    <property type="project" value="UniProtKB-KW"/>
</dbReference>
<dbReference type="GO" id="GO:0030261">
    <property type="term" value="P:chromosome condensation"/>
    <property type="evidence" value="ECO:0007669"/>
    <property type="project" value="UniProtKB-KW"/>
</dbReference>
<dbReference type="GO" id="GO:0007059">
    <property type="term" value="P:chromosome segregation"/>
    <property type="evidence" value="ECO:0007669"/>
    <property type="project" value="UniProtKB-UniRule"/>
</dbReference>
<dbReference type="GO" id="GO:0006260">
    <property type="term" value="P:DNA replication"/>
    <property type="evidence" value="ECO:0007669"/>
    <property type="project" value="UniProtKB-UniRule"/>
</dbReference>
<dbReference type="Gene3D" id="1.20.58.850">
    <property type="match status" value="1"/>
</dbReference>
<dbReference type="Gene3D" id="3.40.1140.10">
    <property type="match status" value="2"/>
</dbReference>
<dbReference type="Gene3D" id="1.20.5.420">
    <property type="entry name" value="Immunoglobulin FC, subunit C"/>
    <property type="match status" value="1"/>
</dbReference>
<dbReference type="Gene3D" id="3.30.70.3500">
    <property type="entry name" value="MukB, hinge domain"/>
    <property type="match status" value="1"/>
</dbReference>
<dbReference type="HAMAP" id="MF_01800">
    <property type="entry name" value="MukB"/>
    <property type="match status" value="1"/>
</dbReference>
<dbReference type="InterPro" id="IPR012090">
    <property type="entry name" value="MukB"/>
</dbReference>
<dbReference type="InterPro" id="IPR050308">
    <property type="entry name" value="MukB/SMC"/>
</dbReference>
<dbReference type="InterPro" id="IPR032520">
    <property type="entry name" value="MukB_hinge"/>
</dbReference>
<dbReference type="InterPro" id="IPR042501">
    <property type="entry name" value="MukB_hinge_sf"/>
</dbReference>
<dbReference type="InterPro" id="IPR007406">
    <property type="entry name" value="MukB_N_dom"/>
</dbReference>
<dbReference type="InterPro" id="IPR027417">
    <property type="entry name" value="P-loop_NTPase"/>
</dbReference>
<dbReference type="NCBIfam" id="NF003422">
    <property type="entry name" value="PRK04863.1"/>
    <property type="match status" value="1"/>
</dbReference>
<dbReference type="PANTHER" id="PTHR42963">
    <property type="entry name" value="CHROMOSOME PARTITION PROTEIN MUKB"/>
    <property type="match status" value="1"/>
</dbReference>
<dbReference type="PANTHER" id="PTHR42963:SF1">
    <property type="entry name" value="DUF4476 DOMAIN-CONTAINING PROTEIN"/>
    <property type="match status" value="1"/>
</dbReference>
<dbReference type="Pfam" id="PF04310">
    <property type="entry name" value="MukB"/>
    <property type="match status" value="1"/>
</dbReference>
<dbReference type="Pfam" id="PF16330">
    <property type="entry name" value="MukB_hinge"/>
    <property type="match status" value="1"/>
</dbReference>
<dbReference type="Pfam" id="PF13558">
    <property type="entry name" value="SbcC_Walker_B"/>
    <property type="match status" value="1"/>
</dbReference>
<dbReference type="PIRSF" id="PIRSF005246">
    <property type="entry name" value="MukB"/>
    <property type="match status" value="1"/>
</dbReference>
<dbReference type="SUPFAM" id="SSF52540">
    <property type="entry name" value="P-loop containing nucleoside triphosphate hydrolases"/>
    <property type="match status" value="2"/>
</dbReference>
<proteinExistence type="inferred from homology"/>
<name>MUKB_HAEIN</name>
<feature type="chain" id="PRO_0000068220" description="Chromosome partition protein MukB">
    <location>
        <begin position="1"/>
        <end position="1510"/>
    </location>
</feature>
<feature type="region of interest" description="Flexible hinge" evidence="1">
    <location>
        <begin position="707"/>
        <end position="824"/>
    </location>
</feature>
<feature type="coiled-coil region" evidence="1">
    <location>
        <begin position="346"/>
        <end position="706"/>
    </location>
</feature>
<feature type="coiled-coil region" evidence="1">
    <location>
        <begin position="825"/>
        <end position="1154"/>
    </location>
</feature>
<feature type="coiled-coil region" evidence="1">
    <location>
        <begin position="1248"/>
        <end position="1304"/>
    </location>
</feature>
<feature type="binding site" evidence="1">
    <location>
        <begin position="75"/>
        <end position="82"/>
    </location>
    <ligand>
        <name>ATP</name>
        <dbReference type="ChEBI" id="CHEBI:30616"/>
    </ligand>
</feature>
<gene>
    <name evidence="1" type="primary">mukB</name>
    <name type="ordered locus">HI_1374</name>
</gene>
<protein>
    <recommendedName>
        <fullName evidence="1">Chromosome partition protein MukB</fullName>
    </recommendedName>
    <alternativeName>
        <fullName evidence="1">Structural maintenance of chromosome-related protein</fullName>
    </alternativeName>
</protein>
<comment type="function">
    <text evidence="1">Plays a central role in chromosome condensation, segregation and cell cycle progression. Functions as a homodimer, which is essential for chromosome partition. Involved in negative DNA supercoiling in vivo, and by this means organize and compact chromosomes. May achieve or facilitate chromosome segregation by condensation DNA from both sides of a centrally located replisome during cell division.</text>
</comment>
<comment type="subunit">
    <text evidence="1">Homodimerization via its hinge domain. Binds to DNA via its C-terminal region. Interacts, and probably forms a ternary complex, with MukE and MukF via its C-terminal region. The complex formation is stimulated by calcium or magnesium. Interacts with tubulin-related protein FtsZ.</text>
</comment>
<comment type="subcellular location">
    <subcellularLocation>
        <location evidence="1">Cytoplasm</location>
        <location evidence="1">Nucleoid</location>
    </subcellularLocation>
    <text evidence="1">Restricted to the nucleoid region.</text>
</comment>
<comment type="domain">
    <text evidence="1">The hinge domain, which separates the large intramolecular coiled coil regions, allows the homodimerization, forming a V-shaped homodimer.</text>
</comment>
<comment type="similarity">
    <text evidence="1">Belongs to the SMC family. MukB subfamily.</text>
</comment>